<protein>
    <recommendedName>
        <fullName>ATP synthase subunit 5, mitochondrial</fullName>
        <shortName>ATP synthase chain 5</shortName>
    </recommendedName>
    <alternativeName>
        <fullName>Oligomycin sensitivity conferral protein</fullName>
        <shortName>OSCP</shortName>
    </alternativeName>
</protein>
<sequence>MFNRVFTRSFASSLRAAASKAAAPPPVRLFGVEGTYATALYQAAAKNSSIDAAFQSLQKVESTVKKNPKLGHLLLNPALSLKDRNSVIDAIVETHKNLDGYVVNLLKVLSENNRLGCFEKIASDFGVLNDAHNGLLKGTVTSAEPLDPKSFKRIEKALSASKLVGQGKSLKLENVVKPEIKGGLIVELGDKTVDLSISTKIQKLNKVLEDSI</sequence>
<proteinExistence type="evidence at protein level"/>
<dbReference type="EMBL" id="X12356">
    <property type="protein sequence ID" value="CAA30917.1"/>
    <property type="molecule type" value="Genomic_DNA"/>
</dbReference>
<dbReference type="EMBL" id="M32487">
    <property type="protein sequence ID" value="AAA34836.1"/>
    <property type="molecule type" value="Genomic_DNA"/>
</dbReference>
<dbReference type="EMBL" id="U28374">
    <property type="protein sequence ID" value="AAB64734.1"/>
    <property type="molecule type" value="Genomic_DNA"/>
</dbReference>
<dbReference type="EMBL" id="AY557732">
    <property type="protein sequence ID" value="AAS56058.1"/>
    <property type="molecule type" value="Genomic_DNA"/>
</dbReference>
<dbReference type="EMBL" id="BK006938">
    <property type="protein sequence ID" value="DAA12137.1"/>
    <property type="molecule type" value="Genomic_DNA"/>
</dbReference>
<dbReference type="PIR" id="S05726">
    <property type="entry name" value="PWBYD"/>
</dbReference>
<dbReference type="RefSeq" id="NP_010584.1">
    <property type="nucleotide sequence ID" value="NM_001180606.1"/>
</dbReference>
<dbReference type="PDB" id="6B8H">
    <property type="method" value="EM"/>
    <property type="resolution" value="3.60 A"/>
    <property type="chains" value="O/o=18-212"/>
</dbReference>
<dbReference type="PDB" id="6CP3">
    <property type="method" value="EM"/>
    <property type="resolution" value="3.80 A"/>
    <property type="chains" value="Y=18-212"/>
</dbReference>
<dbReference type="PDB" id="6CP6">
    <property type="method" value="EM"/>
    <property type="resolution" value="3.60 A"/>
    <property type="chains" value="Y=18-212"/>
</dbReference>
<dbReference type="PDB" id="7TJY">
    <property type="method" value="EM"/>
    <property type="resolution" value="3.80 A"/>
    <property type="chains" value="O=18-212"/>
</dbReference>
<dbReference type="PDB" id="7TJZ">
    <property type="method" value="EM"/>
    <property type="resolution" value="4.40 A"/>
    <property type="chains" value="O=18-212"/>
</dbReference>
<dbReference type="PDB" id="7TK0">
    <property type="method" value="EM"/>
    <property type="resolution" value="4.40 A"/>
    <property type="chains" value="O=18-212"/>
</dbReference>
<dbReference type="PDB" id="7TK1">
    <property type="method" value="EM"/>
    <property type="resolution" value="7.10 A"/>
    <property type="chains" value="O=18-212"/>
</dbReference>
<dbReference type="PDB" id="7TK2">
    <property type="method" value="EM"/>
    <property type="resolution" value="6.50 A"/>
    <property type="chains" value="O=18-212"/>
</dbReference>
<dbReference type="PDB" id="7TK3">
    <property type="method" value="EM"/>
    <property type="resolution" value="6.30 A"/>
    <property type="chains" value="O=18-212"/>
</dbReference>
<dbReference type="PDB" id="7TK4">
    <property type="method" value="EM"/>
    <property type="resolution" value="7.00 A"/>
    <property type="chains" value="O=18-212"/>
</dbReference>
<dbReference type="PDB" id="7TK5">
    <property type="method" value="EM"/>
    <property type="resolution" value="7.80 A"/>
    <property type="chains" value="O=18-212"/>
</dbReference>
<dbReference type="PDB" id="7TK6">
    <property type="method" value="EM"/>
    <property type="resolution" value="6.50 A"/>
    <property type="chains" value="O=18-212"/>
</dbReference>
<dbReference type="PDB" id="7TK7">
    <property type="method" value="EM"/>
    <property type="resolution" value="6.70 A"/>
    <property type="chains" value="O=18-212"/>
</dbReference>
<dbReference type="PDB" id="7TK8">
    <property type="method" value="EM"/>
    <property type="resolution" value="4.70 A"/>
    <property type="chains" value="O=18-212"/>
</dbReference>
<dbReference type="PDB" id="7TK9">
    <property type="method" value="EM"/>
    <property type="resolution" value="6.00 A"/>
    <property type="chains" value="O=18-212"/>
</dbReference>
<dbReference type="PDB" id="7TKA">
    <property type="method" value="EM"/>
    <property type="resolution" value="7.10 A"/>
    <property type="chains" value="O=18-212"/>
</dbReference>
<dbReference type="PDB" id="7TKB">
    <property type="method" value="EM"/>
    <property type="resolution" value="6.30 A"/>
    <property type="chains" value="O=18-212"/>
</dbReference>
<dbReference type="PDB" id="7TKC">
    <property type="method" value="EM"/>
    <property type="resolution" value="5.80 A"/>
    <property type="chains" value="O=18-212"/>
</dbReference>
<dbReference type="PDB" id="7TKD">
    <property type="method" value="EM"/>
    <property type="resolution" value="7.70 A"/>
    <property type="chains" value="O=18-212"/>
</dbReference>
<dbReference type="PDB" id="7TKE">
    <property type="method" value="EM"/>
    <property type="resolution" value="7.10 A"/>
    <property type="chains" value="O=18-212"/>
</dbReference>
<dbReference type="PDB" id="7TKF">
    <property type="method" value="EM"/>
    <property type="resolution" value="7.10 A"/>
    <property type="chains" value="O=18-212"/>
</dbReference>
<dbReference type="PDB" id="7TKG">
    <property type="method" value="EM"/>
    <property type="resolution" value="4.50 A"/>
    <property type="chains" value="O=18-212"/>
</dbReference>
<dbReference type="PDB" id="7TKH">
    <property type="method" value="EM"/>
    <property type="resolution" value="4.40 A"/>
    <property type="chains" value="O=18-212"/>
</dbReference>
<dbReference type="PDB" id="7TKI">
    <property type="method" value="EM"/>
    <property type="resolution" value="7.10 A"/>
    <property type="chains" value="O=18-212"/>
</dbReference>
<dbReference type="PDB" id="7TKJ">
    <property type="method" value="EM"/>
    <property type="resolution" value="7.50 A"/>
    <property type="chains" value="O=18-212"/>
</dbReference>
<dbReference type="PDB" id="7TKK">
    <property type="method" value="EM"/>
    <property type="resolution" value="7.30 A"/>
    <property type="chains" value="O=18-212"/>
</dbReference>
<dbReference type="PDB" id="7TKL">
    <property type="method" value="EM"/>
    <property type="resolution" value="6.40 A"/>
    <property type="chains" value="O=18-212"/>
</dbReference>
<dbReference type="PDB" id="7TKM">
    <property type="method" value="EM"/>
    <property type="resolution" value="4.50 A"/>
    <property type="chains" value="O=18-212"/>
</dbReference>
<dbReference type="PDB" id="7TKN">
    <property type="method" value="EM"/>
    <property type="resolution" value="7.10 A"/>
    <property type="chains" value="O=18-212"/>
</dbReference>
<dbReference type="PDB" id="7TKO">
    <property type="method" value="EM"/>
    <property type="resolution" value="4.80 A"/>
    <property type="chains" value="O=18-212"/>
</dbReference>
<dbReference type="PDB" id="7TKP">
    <property type="method" value="EM"/>
    <property type="resolution" value="4.60 A"/>
    <property type="chains" value="O=18-212"/>
</dbReference>
<dbReference type="PDB" id="7TKQ">
    <property type="method" value="EM"/>
    <property type="resolution" value="4.50 A"/>
    <property type="chains" value="O=18-212"/>
</dbReference>
<dbReference type="PDB" id="7TKR">
    <property type="method" value="EM"/>
    <property type="resolution" value="6.50 A"/>
    <property type="chains" value="O=18-212"/>
</dbReference>
<dbReference type="PDB" id="7TKS">
    <property type="method" value="EM"/>
    <property type="resolution" value="7.50 A"/>
    <property type="chains" value="O=18-212"/>
</dbReference>
<dbReference type="PDB" id="8F29">
    <property type="method" value="EM"/>
    <property type="resolution" value="4.00 A"/>
    <property type="chains" value="Y=24-210"/>
</dbReference>
<dbReference type="PDB" id="8F39">
    <property type="method" value="EM"/>
    <property type="resolution" value="3.50 A"/>
    <property type="chains" value="Y=24-189"/>
</dbReference>
<dbReference type="PDB" id="8FKJ">
    <property type="method" value="EM"/>
    <property type="resolution" value="4.20 A"/>
    <property type="chains" value="Y=24-189"/>
</dbReference>
<dbReference type="PDB" id="8FL8">
    <property type="method" value="EM"/>
    <property type="resolution" value="4.20 A"/>
    <property type="chains" value="Y=24-189"/>
</dbReference>
<dbReference type="PDBsum" id="6B8H"/>
<dbReference type="PDBsum" id="6CP3"/>
<dbReference type="PDBsum" id="6CP6"/>
<dbReference type="PDBsum" id="7TJY"/>
<dbReference type="PDBsum" id="7TJZ"/>
<dbReference type="PDBsum" id="7TK0"/>
<dbReference type="PDBsum" id="7TK1"/>
<dbReference type="PDBsum" id="7TK2"/>
<dbReference type="PDBsum" id="7TK3"/>
<dbReference type="PDBsum" id="7TK4"/>
<dbReference type="PDBsum" id="7TK5"/>
<dbReference type="PDBsum" id="7TK6"/>
<dbReference type="PDBsum" id="7TK7"/>
<dbReference type="PDBsum" id="7TK8"/>
<dbReference type="PDBsum" id="7TK9"/>
<dbReference type="PDBsum" id="7TKA"/>
<dbReference type="PDBsum" id="7TKB"/>
<dbReference type="PDBsum" id="7TKC"/>
<dbReference type="PDBsum" id="7TKD"/>
<dbReference type="PDBsum" id="7TKE"/>
<dbReference type="PDBsum" id="7TKF"/>
<dbReference type="PDBsum" id="7TKG"/>
<dbReference type="PDBsum" id="7TKH"/>
<dbReference type="PDBsum" id="7TKI"/>
<dbReference type="PDBsum" id="7TKJ"/>
<dbReference type="PDBsum" id="7TKK"/>
<dbReference type="PDBsum" id="7TKL"/>
<dbReference type="PDBsum" id="7TKM"/>
<dbReference type="PDBsum" id="7TKN"/>
<dbReference type="PDBsum" id="7TKO"/>
<dbReference type="PDBsum" id="7TKP"/>
<dbReference type="PDBsum" id="7TKQ"/>
<dbReference type="PDBsum" id="7TKR"/>
<dbReference type="PDBsum" id="7TKS"/>
<dbReference type="PDBsum" id="8F29"/>
<dbReference type="PDBsum" id="8F39"/>
<dbReference type="PDBsum" id="8FKJ"/>
<dbReference type="PDBsum" id="8FL8"/>
<dbReference type="EMDB" id="EMD-25946"/>
<dbReference type="EMDB" id="EMD-25947"/>
<dbReference type="EMDB" id="EMD-25948"/>
<dbReference type="EMDB" id="EMD-25949"/>
<dbReference type="EMDB" id="EMD-25954"/>
<dbReference type="EMDB" id="EMD-25955"/>
<dbReference type="EMDB" id="EMD-25956"/>
<dbReference type="EMDB" id="EMD-25957"/>
<dbReference type="EMDB" id="EMD-25958"/>
<dbReference type="EMDB" id="EMD-25959"/>
<dbReference type="EMDB" id="EMD-25960"/>
<dbReference type="EMDB" id="EMD-25961"/>
<dbReference type="EMDB" id="EMD-25962"/>
<dbReference type="EMDB" id="EMD-25963"/>
<dbReference type="EMDB" id="EMD-25964"/>
<dbReference type="EMDB" id="EMD-25965"/>
<dbReference type="EMDB" id="EMD-25966"/>
<dbReference type="EMDB" id="EMD-25967"/>
<dbReference type="EMDB" id="EMD-25968"/>
<dbReference type="EMDB" id="EMD-25969"/>
<dbReference type="EMDB" id="EMD-25970"/>
<dbReference type="EMDB" id="EMD-25971"/>
<dbReference type="EMDB" id="EMD-25972"/>
<dbReference type="EMDB" id="EMD-25973"/>
<dbReference type="EMDB" id="EMD-25974"/>
<dbReference type="EMDB" id="EMD-25975"/>
<dbReference type="EMDB" id="EMD-25976"/>
<dbReference type="EMDB" id="EMD-25977"/>
<dbReference type="EMDB" id="EMD-25978"/>
<dbReference type="EMDB" id="EMD-25979"/>
<dbReference type="EMDB" id="EMD-25980"/>
<dbReference type="EMDB" id="EMD-28809"/>
<dbReference type="EMDB" id="EMD-28835"/>
<dbReference type="EMDB" id="EMD-7546"/>
<dbReference type="EMDB" id="EMD-7548"/>
<dbReference type="SMR" id="P09457"/>
<dbReference type="BioGRID" id="32350">
    <property type="interactions" value="188"/>
</dbReference>
<dbReference type="ComplexPortal" id="CPX-3281">
    <property type="entry name" value="Mitochondrial proton-transporting ATP synthase complex"/>
</dbReference>
<dbReference type="DIP" id="DIP-3037N"/>
<dbReference type="FunCoup" id="P09457">
    <property type="interactions" value="920"/>
</dbReference>
<dbReference type="IntAct" id="P09457">
    <property type="interactions" value="44"/>
</dbReference>
<dbReference type="MINT" id="P09457"/>
<dbReference type="STRING" id="4932.YDR298C"/>
<dbReference type="TCDB" id="3.A.2.1.3">
    <property type="family name" value="the h+- or na+-translocating f-type, v-type and a-type atpase (f-atpase) superfamily"/>
</dbReference>
<dbReference type="iPTMnet" id="P09457"/>
<dbReference type="PaxDb" id="4932-YDR298C"/>
<dbReference type="PeptideAtlas" id="P09457"/>
<dbReference type="EnsemblFungi" id="YDR298C_mRNA">
    <property type="protein sequence ID" value="YDR298C"/>
    <property type="gene ID" value="YDR298C"/>
</dbReference>
<dbReference type="GeneID" id="851892"/>
<dbReference type="KEGG" id="sce:YDR298C"/>
<dbReference type="AGR" id="SGD:S000002706"/>
<dbReference type="SGD" id="S000002706">
    <property type="gene designation" value="ATP5"/>
</dbReference>
<dbReference type="VEuPathDB" id="FungiDB:YDR298C"/>
<dbReference type="eggNOG" id="KOG1662">
    <property type="taxonomic scope" value="Eukaryota"/>
</dbReference>
<dbReference type="GeneTree" id="ENSGT00390000015060"/>
<dbReference type="HOGENOM" id="CLU_085114_0_0_1"/>
<dbReference type="InParanoid" id="P09457"/>
<dbReference type="OMA" id="MVDNIQD"/>
<dbReference type="OrthoDB" id="1262810at2759"/>
<dbReference type="BioCyc" id="YEAST:G3O-29859-MONOMER"/>
<dbReference type="Reactome" id="R-SCE-9837999">
    <property type="pathway name" value="Mitochondrial protein degradation"/>
</dbReference>
<dbReference type="BioGRID-ORCS" id="851892">
    <property type="hits" value="6 hits in 10 CRISPR screens"/>
</dbReference>
<dbReference type="PRO" id="PR:P09457"/>
<dbReference type="Proteomes" id="UP000002311">
    <property type="component" value="Chromosome IV"/>
</dbReference>
<dbReference type="RNAct" id="P09457">
    <property type="molecule type" value="protein"/>
</dbReference>
<dbReference type="GO" id="GO:0005743">
    <property type="term" value="C:mitochondrial inner membrane"/>
    <property type="evidence" value="ECO:0000314"/>
    <property type="project" value="ComplexPortal"/>
</dbReference>
<dbReference type="GO" id="GO:0005739">
    <property type="term" value="C:mitochondrion"/>
    <property type="evidence" value="ECO:0007005"/>
    <property type="project" value="SGD"/>
</dbReference>
<dbReference type="GO" id="GO:0045259">
    <property type="term" value="C:proton-transporting ATP synthase complex"/>
    <property type="evidence" value="ECO:0000314"/>
    <property type="project" value="SGD"/>
</dbReference>
<dbReference type="GO" id="GO:0046933">
    <property type="term" value="F:proton-transporting ATP synthase activity, rotational mechanism"/>
    <property type="evidence" value="ECO:0007669"/>
    <property type="project" value="InterPro"/>
</dbReference>
<dbReference type="GO" id="GO:0015986">
    <property type="term" value="P:proton motive force-driven ATP synthesis"/>
    <property type="evidence" value="ECO:0000314"/>
    <property type="project" value="ComplexPortal"/>
</dbReference>
<dbReference type="GO" id="GO:0042776">
    <property type="term" value="P:proton motive force-driven mitochondrial ATP synthesis"/>
    <property type="evidence" value="ECO:0000318"/>
    <property type="project" value="GO_Central"/>
</dbReference>
<dbReference type="FunFam" id="1.10.520.20:FF:000002">
    <property type="entry name" value="ATP synthase subunit O, mitochondrial"/>
    <property type="match status" value="1"/>
</dbReference>
<dbReference type="Gene3D" id="1.10.520.20">
    <property type="entry name" value="N-terminal domain of the delta subunit of the F1F0-ATP synthase"/>
    <property type="match status" value="1"/>
</dbReference>
<dbReference type="HAMAP" id="MF_01416">
    <property type="entry name" value="ATP_synth_delta_bact"/>
    <property type="match status" value="1"/>
</dbReference>
<dbReference type="InterPro" id="IPR026015">
    <property type="entry name" value="ATP_synth_OSCP/delta_N_sf"/>
</dbReference>
<dbReference type="InterPro" id="IPR020781">
    <property type="entry name" value="ATPase_OSCP/d_CS"/>
</dbReference>
<dbReference type="InterPro" id="IPR000711">
    <property type="entry name" value="ATPase_OSCP/dsu"/>
</dbReference>
<dbReference type="NCBIfam" id="TIGR01145">
    <property type="entry name" value="ATP_synt_delta"/>
    <property type="match status" value="1"/>
</dbReference>
<dbReference type="PANTHER" id="PTHR11910">
    <property type="entry name" value="ATP SYNTHASE DELTA CHAIN"/>
    <property type="match status" value="1"/>
</dbReference>
<dbReference type="Pfam" id="PF00213">
    <property type="entry name" value="OSCP"/>
    <property type="match status" value="1"/>
</dbReference>
<dbReference type="PRINTS" id="PR00125">
    <property type="entry name" value="ATPASEDELTA"/>
</dbReference>
<dbReference type="SUPFAM" id="SSF47928">
    <property type="entry name" value="N-terminal domain of the delta subunit of the F1F0-ATP synthase"/>
    <property type="match status" value="1"/>
</dbReference>
<dbReference type="PROSITE" id="PS00389">
    <property type="entry name" value="ATPASE_DELTA"/>
    <property type="match status" value="1"/>
</dbReference>
<keyword id="KW-0002">3D-structure</keyword>
<keyword id="KW-0066">ATP synthesis</keyword>
<keyword id="KW-0375">Hydrogen ion transport</keyword>
<keyword id="KW-0406">Ion transport</keyword>
<keyword id="KW-0472">Membrane</keyword>
<keyword id="KW-0496">Mitochondrion</keyword>
<keyword id="KW-0999">Mitochondrion inner membrane</keyword>
<keyword id="KW-1185">Reference proteome</keyword>
<keyword id="KW-0809">Transit peptide</keyword>
<keyword id="KW-0813">Transport</keyword>
<gene>
    <name type="primary">ATP5</name>
    <name type="synonym">OSCP</name>
    <name type="ordered locus">YDR298C</name>
    <name type="ORF">D9740.11</name>
</gene>
<accession>P09457</accession>
<accession>D6VSS7</accession>
<reference key="1">
    <citation type="journal article" date="1988" name="Nucleic Acids Res.">
        <title>The sequence of the yeast ATP5 gene.</title>
        <authorList>
            <person name="Lee M."/>
            <person name="Jones D."/>
            <person name="Mueller D.M."/>
        </authorList>
    </citation>
    <scope>NUCLEOTIDE SEQUENCE [GENOMIC DNA]</scope>
    <source>
        <strain>ATCC 24657 / D273-10B</strain>
    </source>
</reference>
<reference key="2">
    <citation type="journal article" date="1990" name="J. Biol. Chem.">
        <title>The gene coding for the yeast oligomycin sensitivity-conferring protein.</title>
        <authorList>
            <person name="Uh M."/>
            <person name="Jones D."/>
            <person name="Mueller D.M."/>
        </authorList>
    </citation>
    <scope>NUCLEOTIDE SEQUENCE [GENOMIC DNA]</scope>
</reference>
<reference key="3">
    <citation type="journal article" date="1997" name="Nature">
        <title>The nucleotide sequence of Saccharomyces cerevisiae chromosome IV.</title>
        <authorList>
            <person name="Jacq C."/>
            <person name="Alt-Moerbe J."/>
            <person name="Andre B."/>
            <person name="Arnold W."/>
            <person name="Bahr A."/>
            <person name="Ballesta J.P.G."/>
            <person name="Bargues M."/>
            <person name="Baron L."/>
            <person name="Becker A."/>
            <person name="Biteau N."/>
            <person name="Bloecker H."/>
            <person name="Blugeon C."/>
            <person name="Boskovic J."/>
            <person name="Brandt P."/>
            <person name="Brueckner M."/>
            <person name="Buitrago M.J."/>
            <person name="Coster F."/>
            <person name="Delaveau T."/>
            <person name="del Rey F."/>
            <person name="Dujon B."/>
            <person name="Eide L.G."/>
            <person name="Garcia-Cantalejo J.M."/>
            <person name="Goffeau A."/>
            <person name="Gomez-Peris A."/>
            <person name="Granotier C."/>
            <person name="Hanemann V."/>
            <person name="Hankeln T."/>
            <person name="Hoheisel J.D."/>
            <person name="Jaeger W."/>
            <person name="Jimenez A."/>
            <person name="Jonniaux J.-L."/>
            <person name="Kraemer C."/>
            <person name="Kuester H."/>
            <person name="Laamanen P."/>
            <person name="Legros Y."/>
            <person name="Louis E.J."/>
            <person name="Moeller-Rieker S."/>
            <person name="Monnet A."/>
            <person name="Moro M."/>
            <person name="Mueller-Auer S."/>
            <person name="Nussbaumer B."/>
            <person name="Paricio N."/>
            <person name="Paulin L."/>
            <person name="Perea J."/>
            <person name="Perez-Alonso M."/>
            <person name="Perez-Ortin J.E."/>
            <person name="Pohl T.M."/>
            <person name="Prydz H."/>
            <person name="Purnelle B."/>
            <person name="Rasmussen S.W."/>
            <person name="Remacha M.A."/>
            <person name="Revuelta J.L."/>
            <person name="Rieger M."/>
            <person name="Salom D."/>
            <person name="Saluz H.P."/>
            <person name="Saiz J.E."/>
            <person name="Saren A.-M."/>
            <person name="Schaefer M."/>
            <person name="Scharfe M."/>
            <person name="Schmidt E.R."/>
            <person name="Schneider C."/>
            <person name="Scholler P."/>
            <person name="Schwarz S."/>
            <person name="Soler-Mira A."/>
            <person name="Urrestarazu L.A."/>
            <person name="Verhasselt P."/>
            <person name="Vissers S."/>
            <person name="Voet M."/>
            <person name="Volckaert G."/>
            <person name="Wagner G."/>
            <person name="Wambutt R."/>
            <person name="Wedler E."/>
            <person name="Wedler H."/>
            <person name="Woelfl S."/>
            <person name="Harris D.E."/>
            <person name="Bowman S."/>
            <person name="Brown D."/>
            <person name="Churcher C.M."/>
            <person name="Connor R."/>
            <person name="Dedman K."/>
            <person name="Gentles S."/>
            <person name="Hamlin N."/>
            <person name="Hunt S."/>
            <person name="Jones L."/>
            <person name="McDonald S."/>
            <person name="Murphy L.D."/>
            <person name="Niblett D."/>
            <person name="Odell C."/>
            <person name="Oliver K."/>
            <person name="Rajandream M.A."/>
            <person name="Richards C."/>
            <person name="Shore L."/>
            <person name="Walsh S.V."/>
            <person name="Barrell B.G."/>
            <person name="Dietrich F.S."/>
            <person name="Mulligan J.T."/>
            <person name="Allen E."/>
            <person name="Araujo R."/>
            <person name="Aviles E."/>
            <person name="Berno A."/>
            <person name="Carpenter J."/>
            <person name="Chen E."/>
            <person name="Cherry J.M."/>
            <person name="Chung E."/>
            <person name="Duncan M."/>
            <person name="Hunicke-Smith S."/>
            <person name="Hyman R.W."/>
            <person name="Komp C."/>
            <person name="Lashkari D."/>
            <person name="Lew H."/>
            <person name="Lin D."/>
            <person name="Mosedale D."/>
            <person name="Nakahara K."/>
            <person name="Namath A."/>
            <person name="Oefner P."/>
            <person name="Oh C."/>
            <person name="Petel F.X."/>
            <person name="Roberts D."/>
            <person name="Schramm S."/>
            <person name="Schroeder M."/>
            <person name="Shogren T."/>
            <person name="Shroff N."/>
            <person name="Winant A."/>
            <person name="Yelton M.A."/>
            <person name="Botstein D."/>
            <person name="Davis R.W."/>
            <person name="Johnston M."/>
            <person name="Andrews S."/>
            <person name="Brinkman R."/>
            <person name="Cooper J."/>
            <person name="Ding H."/>
            <person name="Du Z."/>
            <person name="Favello A."/>
            <person name="Fulton L."/>
            <person name="Gattung S."/>
            <person name="Greco T."/>
            <person name="Hallsworth K."/>
            <person name="Hawkins J."/>
            <person name="Hillier L.W."/>
            <person name="Jier M."/>
            <person name="Johnson D."/>
            <person name="Johnston L."/>
            <person name="Kirsten J."/>
            <person name="Kucaba T."/>
            <person name="Langston Y."/>
            <person name="Latreille P."/>
            <person name="Le T."/>
            <person name="Mardis E."/>
            <person name="Menezes S."/>
            <person name="Miller N."/>
            <person name="Nhan M."/>
            <person name="Pauley A."/>
            <person name="Peluso D."/>
            <person name="Rifkin L."/>
            <person name="Riles L."/>
            <person name="Taich A."/>
            <person name="Trevaskis E."/>
            <person name="Vignati D."/>
            <person name="Wilcox L."/>
            <person name="Wohldman P."/>
            <person name="Vaudin M."/>
            <person name="Wilson R."/>
            <person name="Waterston R."/>
            <person name="Albermann K."/>
            <person name="Hani J."/>
            <person name="Heumann K."/>
            <person name="Kleine K."/>
            <person name="Mewes H.-W."/>
            <person name="Zollner A."/>
            <person name="Zaccaria P."/>
        </authorList>
    </citation>
    <scope>NUCLEOTIDE SEQUENCE [LARGE SCALE GENOMIC DNA]</scope>
    <source>
        <strain>ATCC 204508 / S288c</strain>
    </source>
</reference>
<reference key="4">
    <citation type="journal article" date="2014" name="G3 (Bethesda)">
        <title>The reference genome sequence of Saccharomyces cerevisiae: Then and now.</title>
        <authorList>
            <person name="Engel S.R."/>
            <person name="Dietrich F.S."/>
            <person name="Fisk D.G."/>
            <person name="Binkley G."/>
            <person name="Balakrishnan R."/>
            <person name="Costanzo M.C."/>
            <person name="Dwight S.S."/>
            <person name="Hitz B.C."/>
            <person name="Karra K."/>
            <person name="Nash R.S."/>
            <person name="Weng S."/>
            <person name="Wong E.D."/>
            <person name="Lloyd P."/>
            <person name="Skrzypek M.S."/>
            <person name="Miyasato S.R."/>
            <person name="Simison M."/>
            <person name="Cherry J.M."/>
        </authorList>
    </citation>
    <scope>GENOME REANNOTATION</scope>
    <source>
        <strain>ATCC 204508 / S288c</strain>
    </source>
</reference>
<reference key="5">
    <citation type="journal article" date="2007" name="Genome Res.">
        <title>Approaching a complete repository of sequence-verified protein-encoding clones for Saccharomyces cerevisiae.</title>
        <authorList>
            <person name="Hu Y."/>
            <person name="Rolfs A."/>
            <person name="Bhullar B."/>
            <person name="Murthy T.V.S."/>
            <person name="Zhu C."/>
            <person name="Berger M.F."/>
            <person name="Camargo A.A."/>
            <person name="Kelley F."/>
            <person name="McCarron S."/>
            <person name="Jepson D."/>
            <person name="Richardson A."/>
            <person name="Raphael J."/>
            <person name="Moreira D."/>
            <person name="Taycher E."/>
            <person name="Zuo D."/>
            <person name="Mohr S."/>
            <person name="Kane M.F."/>
            <person name="Williamson J."/>
            <person name="Simpson A.J.G."/>
            <person name="Bulyk M.L."/>
            <person name="Harlow E."/>
            <person name="Marsischky G."/>
            <person name="Kolodner R.D."/>
            <person name="LaBaer J."/>
        </authorList>
    </citation>
    <scope>NUCLEOTIDE SEQUENCE [GENOMIC DNA]</scope>
    <source>
        <strain>ATCC 204508 / S288c</strain>
    </source>
</reference>
<reference key="6">
    <citation type="journal article" date="2003" name="Nature">
        <title>Global analysis of protein expression in yeast.</title>
        <authorList>
            <person name="Ghaemmaghami S."/>
            <person name="Huh W.-K."/>
            <person name="Bower K."/>
            <person name="Howson R.W."/>
            <person name="Belle A."/>
            <person name="Dephoure N."/>
            <person name="O'Shea E.K."/>
            <person name="Weissman J.S."/>
        </authorList>
    </citation>
    <scope>LEVEL OF PROTEIN EXPRESSION [LARGE SCALE ANALYSIS]</scope>
</reference>
<reference key="7">
    <citation type="journal article" date="2007" name="Mol. Cell. Proteomics">
        <title>Profiling phosphoproteins of yeast mitochondria reveals a role of phosphorylation in assembly of the ATP synthase.</title>
        <authorList>
            <person name="Reinders J."/>
            <person name="Wagner K."/>
            <person name="Zahedi R.P."/>
            <person name="Stojanovski D."/>
            <person name="Eyrich B."/>
            <person name="van der Laan M."/>
            <person name="Rehling P."/>
            <person name="Sickmann A."/>
            <person name="Pfanner N."/>
            <person name="Meisinger C."/>
        </authorList>
    </citation>
    <scope>IDENTIFICATION BY MASS SPECTROMETRY [LARGE SCALE ANALYSIS]</scope>
    <source>
        <strain>ATCC 76625 / YPH499</strain>
    </source>
</reference>
<name>ATPO_YEAST</name>
<comment type="function">
    <text>Mitochondrial membrane ATP synthase (F(1)F(0) ATP synthase or Complex V) produces ATP from ADP in the presence of a proton gradient across the membrane which is generated by electron transport complexes of the respiratory chain. F-type ATPases consist of two structural domains, F(1) - containing the extramembraneous catalytic core and F(0) - containing the membrane proton channel, linked together by a central stalk and a peripheral stalk. During catalysis, ATP synthesis in the catalytic domain of F(1) is coupled via a rotary mechanism of the central stalk subunits to proton translocation. Part of the complex F(0) domain and the peripheric stalk, which acts as a stator to hold the catalytic alpha(3)beta(3) subcomplex and subunit a/ATP6 static relative to the rotary elements.</text>
</comment>
<comment type="subunit">
    <text>F-type ATPases have 2 components, CF(1) - the catalytic core - and CF(0) - the membrane proton channel. CF(1) has five subunits: alpha(3), beta(3), gamma(1), delta(1), epsilon(1). CF(0) has three main subunits: a, b and c.</text>
</comment>
<comment type="subcellular location">
    <subcellularLocation>
        <location>Mitochondrion</location>
    </subcellularLocation>
    <subcellularLocation>
        <location>Mitochondrion inner membrane</location>
    </subcellularLocation>
</comment>
<comment type="miscellaneous">
    <text evidence="1">Present with 32400 molecules/cell in log phase SD medium.</text>
</comment>
<comment type="similarity">
    <text evidence="2">Belongs to the ATPase delta chain family.</text>
</comment>
<feature type="transit peptide" description="Mitochondrion">
    <location>
        <begin position="1"/>
        <end position="17"/>
    </location>
</feature>
<feature type="chain" id="PRO_0000002656" description="ATP synthase subunit 5, mitochondrial">
    <location>
        <begin position="18"/>
        <end position="212"/>
    </location>
</feature>
<evidence type="ECO:0000269" key="1">
    <source>
    </source>
</evidence>
<evidence type="ECO:0000305" key="2"/>
<organism>
    <name type="scientific">Saccharomyces cerevisiae (strain ATCC 204508 / S288c)</name>
    <name type="common">Baker's yeast</name>
    <dbReference type="NCBI Taxonomy" id="559292"/>
    <lineage>
        <taxon>Eukaryota</taxon>
        <taxon>Fungi</taxon>
        <taxon>Dikarya</taxon>
        <taxon>Ascomycota</taxon>
        <taxon>Saccharomycotina</taxon>
        <taxon>Saccharomycetes</taxon>
        <taxon>Saccharomycetales</taxon>
        <taxon>Saccharomycetaceae</taxon>
        <taxon>Saccharomyces</taxon>
    </lineage>
</organism>